<reference key="1">
    <citation type="journal article" date="2005" name="Nature">
        <title>Genomic sequence of the pathogenic and allergenic filamentous fungus Aspergillus fumigatus.</title>
        <authorList>
            <person name="Nierman W.C."/>
            <person name="Pain A."/>
            <person name="Anderson M.J."/>
            <person name="Wortman J.R."/>
            <person name="Kim H.S."/>
            <person name="Arroyo J."/>
            <person name="Berriman M."/>
            <person name="Abe K."/>
            <person name="Archer D.B."/>
            <person name="Bermejo C."/>
            <person name="Bennett J.W."/>
            <person name="Bowyer P."/>
            <person name="Chen D."/>
            <person name="Collins M."/>
            <person name="Coulsen R."/>
            <person name="Davies R."/>
            <person name="Dyer P.S."/>
            <person name="Farman M.L."/>
            <person name="Fedorova N."/>
            <person name="Fedorova N.D."/>
            <person name="Feldblyum T.V."/>
            <person name="Fischer R."/>
            <person name="Fosker N."/>
            <person name="Fraser A."/>
            <person name="Garcia J.L."/>
            <person name="Garcia M.J."/>
            <person name="Goble A."/>
            <person name="Goldman G.H."/>
            <person name="Gomi K."/>
            <person name="Griffith-Jones S."/>
            <person name="Gwilliam R."/>
            <person name="Haas B.J."/>
            <person name="Haas H."/>
            <person name="Harris D.E."/>
            <person name="Horiuchi H."/>
            <person name="Huang J."/>
            <person name="Humphray S."/>
            <person name="Jimenez J."/>
            <person name="Keller N."/>
            <person name="Khouri H."/>
            <person name="Kitamoto K."/>
            <person name="Kobayashi T."/>
            <person name="Konzack S."/>
            <person name="Kulkarni R."/>
            <person name="Kumagai T."/>
            <person name="Lafton A."/>
            <person name="Latge J.-P."/>
            <person name="Li W."/>
            <person name="Lord A."/>
            <person name="Lu C."/>
            <person name="Majoros W.H."/>
            <person name="May G.S."/>
            <person name="Miller B.L."/>
            <person name="Mohamoud Y."/>
            <person name="Molina M."/>
            <person name="Monod M."/>
            <person name="Mouyna I."/>
            <person name="Mulligan S."/>
            <person name="Murphy L.D."/>
            <person name="O'Neil S."/>
            <person name="Paulsen I."/>
            <person name="Penalva M.A."/>
            <person name="Pertea M."/>
            <person name="Price C."/>
            <person name="Pritchard B.L."/>
            <person name="Quail M.A."/>
            <person name="Rabbinowitsch E."/>
            <person name="Rawlins N."/>
            <person name="Rajandream M.A."/>
            <person name="Reichard U."/>
            <person name="Renauld H."/>
            <person name="Robson G.D."/>
            <person name="Rodriguez de Cordoba S."/>
            <person name="Rodriguez-Pena J.M."/>
            <person name="Ronning C.M."/>
            <person name="Rutter S."/>
            <person name="Salzberg S.L."/>
            <person name="Sanchez M."/>
            <person name="Sanchez-Ferrero J.C."/>
            <person name="Saunders D."/>
            <person name="Seeger K."/>
            <person name="Squares R."/>
            <person name="Squares S."/>
            <person name="Takeuchi M."/>
            <person name="Tekaia F."/>
            <person name="Turner G."/>
            <person name="Vazquez de Aldana C.R."/>
            <person name="Weidman J."/>
            <person name="White O."/>
            <person name="Woodward J.R."/>
            <person name="Yu J.-H."/>
            <person name="Fraser C.M."/>
            <person name="Galagan J.E."/>
            <person name="Asai K."/>
            <person name="Machida M."/>
            <person name="Hall N."/>
            <person name="Barrell B.G."/>
            <person name="Denning D.W."/>
        </authorList>
    </citation>
    <scope>NUCLEOTIDE SEQUENCE [LARGE SCALE GENOMIC DNA]</scope>
    <source>
        <strain>ATCC MYA-4609 / CBS 101355 / FGSC A1100 / Af293</strain>
    </source>
</reference>
<reference key="2">
    <citation type="journal article" date="2014" name="Fungal Genet. Biol.">
        <title>The three Aspergillus fumigatus CFEM-domain GPI-anchored proteins (CfmA-C) affect cell-wall stability but do not play a role in fungal virulence.</title>
        <authorList>
            <person name="Vaknin Y."/>
            <person name="Shadkchan Y."/>
            <person name="Levdansky E."/>
            <person name="Morozov M."/>
            <person name="Romano J."/>
            <person name="Osherov N."/>
        </authorList>
    </citation>
    <scope>DOMAIN</scope>
    <scope>DISRUPTION PHENOTYPE</scope>
    <scope>FUNCTION</scope>
</reference>
<evidence type="ECO:0000250" key="1">
    <source>
        <dbReference type="UniProtKB" id="Q4WLB9"/>
    </source>
</evidence>
<evidence type="ECO:0000250" key="2">
    <source>
        <dbReference type="UniProtKB" id="Q59UT4"/>
    </source>
</evidence>
<evidence type="ECO:0000250" key="3">
    <source>
        <dbReference type="UniProtKB" id="Q5A0X8"/>
    </source>
</evidence>
<evidence type="ECO:0000255" key="4"/>
<evidence type="ECO:0000255" key="5">
    <source>
        <dbReference type="PROSITE-ProRule" id="PRU01356"/>
    </source>
</evidence>
<evidence type="ECO:0000256" key="6">
    <source>
        <dbReference type="SAM" id="MobiDB-lite"/>
    </source>
</evidence>
<evidence type="ECO:0000269" key="7">
    <source>
    </source>
</evidence>
<evidence type="ECO:0000303" key="8">
    <source>
    </source>
</evidence>
<evidence type="ECO:0000305" key="9"/>
<feature type="signal peptide" evidence="4">
    <location>
        <begin position="1"/>
        <end position="18"/>
    </location>
</feature>
<feature type="chain" id="PRO_0000431737" description="GPI-anchored hemophore cfmB" evidence="4">
    <location>
        <begin position="19"/>
        <end position="180"/>
    </location>
</feature>
<feature type="propeptide" id="PRO_0000431738" description="Removed in mature form" evidence="4">
    <location>
        <begin position="181"/>
        <end position="202"/>
    </location>
</feature>
<feature type="domain" description="CFEM" evidence="5">
    <location>
        <begin position="19"/>
        <end position="108"/>
    </location>
</feature>
<feature type="region of interest" description="Disordered" evidence="6">
    <location>
        <begin position="94"/>
        <end position="171"/>
    </location>
</feature>
<feature type="compositionally biased region" description="Low complexity" evidence="6">
    <location>
        <begin position="97"/>
        <end position="171"/>
    </location>
</feature>
<feature type="binding site" description="axial binding residue" evidence="5">
    <location>
        <position position="45"/>
    </location>
    <ligand>
        <name>heme</name>
        <dbReference type="ChEBI" id="CHEBI:30413"/>
    </ligand>
    <ligandPart>
        <name>Fe</name>
        <dbReference type="ChEBI" id="CHEBI:18248"/>
    </ligandPart>
</feature>
<feature type="lipid moiety-binding region" description="GPI-anchor amidated asparagine" evidence="4">
    <location>
        <position position="180"/>
    </location>
</feature>
<feature type="disulfide bond" evidence="5">
    <location>
        <begin position="26"/>
        <end position="67"/>
    </location>
</feature>
<feature type="disulfide bond" evidence="5">
    <location>
        <begin position="30"/>
        <end position="62"/>
    </location>
</feature>
<feature type="disulfide bond" evidence="5">
    <location>
        <begin position="40"/>
        <end position="48"/>
    </location>
</feature>
<feature type="disulfide bond" evidence="5">
    <location>
        <begin position="50"/>
        <end position="83"/>
    </location>
</feature>
<gene>
    <name evidence="8" type="primary">cfmB</name>
    <name type="ORF">AFUA_6G10580</name>
</gene>
<protein>
    <recommendedName>
        <fullName evidence="9">GPI-anchored hemophore cfmB</fullName>
    </recommendedName>
    <alternativeName>
        <fullName evidence="8">GPI-anchored CFEM domain protein B</fullName>
    </alternativeName>
</protein>
<comment type="function">
    <text evidence="7">GPI-anchored cell wall protein involved in stabilizing the cell wall. Not implicated in virulence, heme uptake and biofilm formation.</text>
</comment>
<comment type="subcellular location">
    <subcellularLocation>
        <location evidence="2">Secreted</location>
        <location evidence="2">Cell wall</location>
    </subcellularLocation>
    <subcellularLocation>
        <location evidence="1">Cell membrane</location>
        <topology evidence="1">Lipid-anchor</topology>
        <topology evidence="1">GPI-anchor</topology>
    </subcellularLocation>
    <text evidence="2">Found anchored in the cell membrane as well as a covalently-linked GPI-modified cell wall protein (GPI-CWP).</text>
</comment>
<comment type="domain">
    <text evidence="3">The CFEM domain is involved in heme-binding and contains 8 cysteines and is found in proteins from several pathogenic fungi, including both human and plant pathogens (By similarity). The CFEM domain adopts a novel helical-basket fold that consists of six alpha-helices, and is uniquely stabilized by four disulfide bonds formed by its 8 signature cysteines (By similarity).</text>
</comment>
<comment type="PTM">
    <text evidence="9">The GPI-anchor is attached to the protein in the endoplasmic reticulum and serves to target the protein to the cell surface. There, the glucosamine-inositol phospholipid moiety is cleaved off and the GPI-modified mannoprotein is covalently attached via its lipidless GPI glycan remnant to the 1,6-beta-glucan of the outer cell wall layer.</text>
</comment>
<comment type="disruption phenotype">
    <text evidence="7">Increases susceptibility towards the chitin/beta-glucan-microfibril destabilizing compounds Congo red and calcofluor white.</text>
</comment>
<comment type="similarity">
    <text evidence="9">Belongs to the RBT5 family.</text>
</comment>
<keyword id="KW-1003">Cell membrane</keyword>
<keyword id="KW-0134">Cell wall</keyword>
<keyword id="KW-1015">Disulfide bond</keyword>
<keyword id="KW-0325">Glycoprotein</keyword>
<keyword id="KW-0336">GPI-anchor</keyword>
<keyword id="KW-0349">Heme</keyword>
<keyword id="KW-0408">Iron</keyword>
<keyword id="KW-0449">Lipoprotein</keyword>
<keyword id="KW-0472">Membrane</keyword>
<keyword id="KW-0479">Metal-binding</keyword>
<keyword id="KW-1185">Reference proteome</keyword>
<keyword id="KW-0964">Secreted</keyword>
<keyword id="KW-0732">Signal</keyword>
<proteinExistence type="inferred from homology"/>
<accession>Q4WMA6</accession>
<dbReference type="EMBL" id="AAHF01000006">
    <property type="protein sequence ID" value="EAL88908.1"/>
    <property type="molecule type" value="Genomic_DNA"/>
</dbReference>
<dbReference type="RefSeq" id="XP_750946.1">
    <property type="nucleotide sequence ID" value="XM_745853.1"/>
</dbReference>
<dbReference type="SMR" id="Q4WMA6"/>
<dbReference type="EnsemblFungi" id="EAL88908">
    <property type="protein sequence ID" value="EAL88908"/>
    <property type="gene ID" value="AFUA_6G10580"/>
</dbReference>
<dbReference type="GeneID" id="3508251"/>
<dbReference type="KEGG" id="afm:AFUA_6G10580"/>
<dbReference type="VEuPathDB" id="FungiDB:Afu6g10580"/>
<dbReference type="eggNOG" id="ENOG502SFDE">
    <property type="taxonomic scope" value="Eukaryota"/>
</dbReference>
<dbReference type="HOGENOM" id="CLU_063084_2_0_1"/>
<dbReference type="InParanoid" id="Q4WMA6"/>
<dbReference type="OMA" id="HCQKPEL"/>
<dbReference type="OrthoDB" id="3767534at2759"/>
<dbReference type="PHI-base" id="PHI:4016"/>
<dbReference type="Proteomes" id="UP000002530">
    <property type="component" value="Chromosome 6"/>
</dbReference>
<dbReference type="GO" id="GO:0005576">
    <property type="term" value="C:extracellular region"/>
    <property type="evidence" value="ECO:0007669"/>
    <property type="project" value="UniProtKB-KW"/>
</dbReference>
<dbReference type="GO" id="GO:0009277">
    <property type="term" value="C:fungal-type cell wall"/>
    <property type="evidence" value="ECO:0000318"/>
    <property type="project" value="GO_Central"/>
</dbReference>
<dbReference type="GO" id="GO:0005886">
    <property type="term" value="C:plasma membrane"/>
    <property type="evidence" value="ECO:0007669"/>
    <property type="project" value="UniProtKB-SubCell"/>
</dbReference>
<dbReference type="GO" id="GO:0098552">
    <property type="term" value="C:side of membrane"/>
    <property type="evidence" value="ECO:0007669"/>
    <property type="project" value="UniProtKB-KW"/>
</dbReference>
<dbReference type="GO" id="GO:0046872">
    <property type="term" value="F:metal ion binding"/>
    <property type="evidence" value="ECO:0007669"/>
    <property type="project" value="UniProtKB-KW"/>
</dbReference>
<dbReference type="InterPro" id="IPR051735">
    <property type="entry name" value="CFEM_domain"/>
</dbReference>
<dbReference type="InterPro" id="IPR008427">
    <property type="entry name" value="Extracellular_membr_CFEM_dom"/>
</dbReference>
<dbReference type="PANTHER" id="PTHR37928">
    <property type="entry name" value="CFEM DOMAIN PROTEIN (AFU_ORTHOLOGUE AFUA_6G14090)"/>
    <property type="match status" value="1"/>
</dbReference>
<dbReference type="PANTHER" id="PTHR37928:SF2">
    <property type="entry name" value="GPI ANCHORED CFEM DOMAIN PROTEIN (AFU_ORTHOLOGUE AFUA_6G10580)"/>
    <property type="match status" value="1"/>
</dbReference>
<dbReference type="Pfam" id="PF05730">
    <property type="entry name" value="CFEM"/>
    <property type="match status" value="1"/>
</dbReference>
<dbReference type="SMART" id="SM00747">
    <property type="entry name" value="CFEM"/>
    <property type="match status" value="1"/>
</dbReference>
<dbReference type="PROSITE" id="PS52012">
    <property type="entry name" value="CFEM"/>
    <property type="match status" value="1"/>
</dbReference>
<sequence length="202" mass="19683">MHFSRTSLILFAAGLASAQLPNVPGCSLDCFVAALSADGCSSLTDFACHCQKPELVSNITPCVQSACNIADQSSVSVAVVSQCSAAGHPISVPPVGAASTTASETATTTESSTQTTTGTSSTASKTSSSAASSTPSSSSASSSHHHSSSSALTTRTLTSTEPSSQSTSASAAATTTLSGNAGSEKANVAGVVAVAAAALYLL</sequence>
<organism>
    <name type="scientific">Aspergillus fumigatus (strain ATCC MYA-4609 / CBS 101355 / FGSC A1100 / Af293)</name>
    <name type="common">Neosartorya fumigata</name>
    <dbReference type="NCBI Taxonomy" id="330879"/>
    <lineage>
        <taxon>Eukaryota</taxon>
        <taxon>Fungi</taxon>
        <taxon>Dikarya</taxon>
        <taxon>Ascomycota</taxon>
        <taxon>Pezizomycotina</taxon>
        <taxon>Eurotiomycetes</taxon>
        <taxon>Eurotiomycetidae</taxon>
        <taxon>Eurotiales</taxon>
        <taxon>Aspergillaceae</taxon>
        <taxon>Aspergillus</taxon>
        <taxon>Aspergillus subgen. Fumigati</taxon>
    </lineage>
</organism>
<name>CFMB_ASPFU</name>